<feature type="chain" id="PRO_0000315579" description="Uncharacterized Nudix hydrolase NudL">
    <location>
        <begin position="1"/>
        <end position="192"/>
    </location>
</feature>
<feature type="domain" description="Nudix hydrolase" evidence="1">
    <location>
        <begin position="29"/>
        <end position="160"/>
    </location>
</feature>
<feature type="short sequence motif" description="Nudix box">
    <location>
        <begin position="67"/>
        <end position="89"/>
    </location>
</feature>
<feature type="binding site" evidence="1">
    <location>
        <position position="83"/>
    </location>
    <ligand>
        <name>Mg(2+)</name>
        <dbReference type="ChEBI" id="CHEBI:18420"/>
    </ligand>
</feature>
<feature type="binding site" evidence="1">
    <location>
        <position position="87"/>
    </location>
    <ligand>
        <name>Mg(2+)</name>
        <dbReference type="ChEBI" id="CHEBI:18420"/>
    </ligand>
</feature>
<gene>
    <name evidence="1" type="primary">nudL</name>
    <name type="ordered locus">KPN78578_22940</name>
    <name type="ORF">KPN_02329</name>
</gene>
<comment type="function">
    <text evidence="1">Probably mediates the hydrolysis of some nucleoside diphosphate derivatives.</text>
</comment>
<comment type="cofactor">
    <cofactor evidence="1">
        <name>Mn(2+)</name>
        <dbReference type="ChEBI" id="CHEBI:29035"/>
    </cofactor>
    <cofactor evidence="1">
        <name>Mg(2+)</name>
        <dbReference type="ChEBI" id="CHEBI:18420"/>
    </cofactor>
</comment>
<comment type="similarity">
    <text evidence="1">Belongs to the Nudix hydrolase family. PCD1 subfamily.</text>
</comment>
<accession>A6TAY4</accession>
<name>NUDL_KLEP7</name>
<keyword id="KW-0378">Hydrolase</keyword>
<keyword id="KW-0460">Magnesium</keyword>
<keyword id="KW-0464">Manganese</keyword>
<keyword id="KW-0479">Metal-binding</keyword>
<protein>
    <recommendedName>
        <fullName evidence="1">Uncharacterized Nudix hydrolase NudL</fullName>
        <ecNumber evidence="1">3.6.1.-</ecNumber>
    </recommendedName>
</protein>
<dbReference type="EC" id="3.6.1.-" evidence="1"/>
<dbReference type="EMBL" id="CP000647">
    <property type="protein sequence ID" value="ABR77755.1"/>
    <property type="molecule type" value="Genomic_DNA"/>
</dbReference>
<dbReference type="RefSeq" id="WP_004180429.1">
    <property type="nucleotide sequence ID" value="NC_009648.1"/>
</dbReference>
<dbReference type="SMR" id="A6TAY4"/>
<dbReference type="STRING" id="272620.KPN_02329"/>
<dbReference type="PaxDb" id="272620-KPN_02329"/>
<dbReference type="EnsemblBacteria" id="ABR77755">
    <property type="protein sequence ID" value="ABR77755"/>
    <property type="gene ID" value="KPN_02329"/>
</dbReference>
<dbReference type="KEGG" id="kpn:KPN_02329"/>
<dbReference type="HOGENOM" id="CLU_040940_5_2_6"/>
<dbReference type="Proteomes" id="UP000000265">
    <property type="component" value="Chromosome"/>
</dbReference>
<dbReference type="GO" id="GO:0010945">
    <property type="term" value="F:coenzyme A diphosphatase activity"/>
    <property type="evidence" value="ECO:0007669"/>
    <property type="project" value="InterPro"/>
</dbReference>
<dbReference type="GO" id="GO:0000287">
    <property type="term" value="F:magnesium ion binding"/>
    <property type="evidence" value="ECO:0007669"/>
    <property type="project" value="UniProtKB-UniRule"/>
</dbReference>
<dbReference type="GO" id="GO:0030145">
    <property type="term" value="F:manganese ion binding"/>
    <property type="evidence" value="ECO:0007669"/>
    <property type="project" value="UniProtKB-UniRule"/>
</dbReference>
<dbReference type="GO" id="GO:0009132">
    <property type="term" value="P:nucleoside diphosphate metabolic process"/>
    <property type="evidence" value="ECO:0007669"/>
    <property type="project" value="InterPro"/>
</dbReference>
<dbReference type="CDD" id="cd03426">
    <property type="entry name" value="NUDIX_CoAse_Nudt7"/>
    <property type="match status" value="1"/>
</dbReference>
<dbReference type="Gene3D" id="3.90.79.10">
    <property type="entry name" value="Nucleoside Triphosphate Pyrophosphohydrolase"/>
    <property type="match status" value="1"/>
</dbReference>
<dbReference type="HAMAP" id="MF_01592">
    <property type="entry name" value="Nudix_NudL"/>
    <property type="match status" value="1"/>
</dbReference>
<dbReference type="InterPro" id="IPR045121">
    <property type="entry name" value="CoAse"/>
</dbReference>
<dbReference type="InterPro" id="IPR015797">
    <property type="entry name" value="NUDIX_hydrolase-like_dom_sf"/>
</dbReference>
<dbReference type="InterPro" id="IPR000086">
    <property type="entry name" value="NUDIX_hydrolase_dom"/>
</dbReference>
<dbReference type="InterPro" id="IPR000059">
    <property type="entry name" value="NUDIX_hydrolase_NudL_CS"/>
</dbReference>
<dbReference type="InterPro" id="IPR023735">
    <property type="entry name" value="Nudix_NudL"/>
</dbReference>
<dbReference type="NCBIfam" id="NF007980">
    <property type="entry name" value="PRK10707.1"/>
    <property type="match status" value="1"/>
</dbReference>
<dbReference type="PANTHER" id="PTHR12992:SF11">
    <property type="entry name" value="MITOCHONDRIAL COENZYME A DIPHOSPHATASE NUDT8"/>
    <property type="match status" value="1"/>
</dbReference>
<dbReference type="PANTHER" id="PTHR12992">
    <property type="entry name" value="NUDIX HYDROLASE"/>
    <property type="match status" value="1"/>
</dbReference>
<dbReference type="Pfam" id="PF00293">
    <property type="entry name" value="NUDIX"/>
    <property type="match status" value="1"/>
</dbReference>
<dbReference type="SUPFAM" id="SSF55811">
    <property type="entry name" value="Nudix"/>
    <property type="match status" value="1"/>
</dbReference>
<dbReference type="PROSITE" id="PS51462">
    <property type="entry name" value="NUDIX"/>
    <property type="match status" value="1"/>
</dbReference>
<dbReference type="PROSITE" id="PS01293">
    <property type="entry name" value="NUDIX_COA"/>
    <property type="match status" value="1"/>
</dbReference>
<organism>
    <name type="scientific">Klebsiella pneumoniae subsp. pneumoniae (strain ATCC 700721 / MGH 78578)</name>
    <dbReference type="NCBI Taxonomy" id="272620"/>
    <lineage>
        <taxon>Bacteria</taxon>
        <taxon>Pseudomonadati</taxon>
        <taxon>Pseudomonadota</taxon>
        <taxon>Gammaproteobacteria</taxon>
        <taxon>Enterobacterales</taxon>
        <taxon>Enterobacteriaceae</taxon>
        <taxon>Klebsiella/Raoultella group</taxon>
        <taxon>Klebsiella</taxon>
        <taxon>Klebsiella pneumoniae complex</taxon>
    </lineage>
</organism>
<proteinExistence type="inferred from homology"/>
<reference key="1">
    <citation type="submission" date="2006-09" db="EMBL/GenBank/DDBJ databases">
        <authorList>
            <consortium name="The Klebsiella pneumonia Genome Sequencing Project"/>
            <person name="McClelland M."/>
            <person name="Sanderson E.K."/>
            <person name="Spieth J."/>
            <person name="Clifton W.S."/>
            <person name="Latreille P."/>
            <person name="Sabo A."/>
            <person name="Pepin K."/>
            <person name="Bhonagiri V."/>
            <person name="Porwollik S."/>
            <person name="Ali J."/>
            <person name="Wilson R.K."/>
        </authorList>
    </citation>
    <scope>NUCLEOTIDE SEQUENCE [LARGE SCALE GENOMIC DNA]</scope>
    <source>
        <strain>ATCC 700721 / MGH 78578</strain>
    </source>
</reference>
<evidence type="ECO:0000255" key="1">
    <source>
        <dbReference type="HAMAP-Rule" id="MF_01592"/>
    </source>
</evidence>
<sequence>MADRALNLDDFLSRFQLLRPQPSRHALNQRQAAVLVPIVRRPQPGLLLTQRSPLLRKHAGQVAFPGGAVDNTDATLIAAALREAQEEVAIPPEAVEVIGVLPPVDSVTGFQVTPVVGIIPPDLHYHASQDEVSAVFEMPLAEALRLGRYHPLDIHRRGNDHRVWLSWYQHYFVWGMTAGIIRELALQIGARP</sequence>